<gene>
    <name evidence="1" type="primary">atpH</name>
    <name type="ordered locus">mhp052</name>
</gene>
<reference key="1">
    <citation type="journal article" date="2004" name="J. Bacteriol.">
        <title>The genome sequence of Mycoplasma hyopneumoniae strain 232, the agent of swine mycoplasmosis.</title>
        <authorList>
            <person name="Minion F.C."/>
            <person name="Lefkowitz E.J."/>
            <person name="Madsen M.L."/>
            <person name="Cleary B.J."/>
            <person name="Swartzell S.M."/>
            <person name="Mahairas G.G."/>
        </authorList>
    </citation>
    <scope>NUCLEOTIDE SEQUENCE [LARGE SCALE GENOMIC DNA]</scope>
    <source>
        <strain>232</strain>
    </source>
</reference>
<evidence type="ECO:0000255" key="1">
    <source>
        <dbReference type="HAMAP-Rule" id="MF_01416"/>
    </source>
</evidence>
<protein>
    <recommendedName>
        <fullName evidence="1">ATP synthase subunit delta</fullName>
    </recommendedName>
    <alternativeName>
        <fullName evidence="1">ATP synthase F(1) sector subunit delta</fullName>
    </alternativeName>
    <alternativeName>
        <fullName evidence="1">F-type ATPase subunit delta</fullName>
        <shortName evidence="1">F-ATPase subunit delta</shortName>
    </alternativeName>
</protein>
<name>ATPD_MESH2</name>
<proteinExistence type="inferred from homology"/>
<keyword id="KW-0066">ATP synthesis</keyword>
<keyword id="KW-1003">Cell membrane</keyword>
<keyword id="KW-0139">CF(1)</keyword>
<keyword id="KW-0375">Hydrogen ion transport</keyword>
<keyword id="KW-0406">Ion transport</keyword>
<keyword id="KW-0472">Membrane</keyword>
<keyword id="KW-0813">Transport</keyword>
<accession>Q601Z8</accession>
<organism>
    <name type="scientific">Mesomycoplasma hyopneumoniae (strain 232)</name>
    <name type="common">Mycoplasma hyopneumoniae</name>
    <dbReference type="NCBI Taxonomy" id="295358"/>
    <lineage>
        <taxon>Bacteria</taxon>
        <taxon>Bacillati</taxon>
        <taxon>Mycoplasmatota</taxon>
        <taxon>Mycoplasmoidales</taxon>
        <taxon>Metamycoplasmataceae</taxon>
        <taxon>Mesomycoplasma</taxon>
    </lineage>
</organism>
<dbReference type="EMBL" id="AE017332">
    <property type="protein sequence ID" value="AAV27377.1"/>
    <property type="molecule type" value="Genomic_DNA"/>
</dbReference>
<dbReference type="RefSeq" id="WP_011205891.1">
    <property type="nucleotide sequence ID" value="NC_006360.1"/>
</dbReference>
<dbReference type="SMR" id="Q601Z8"/>
<dbReference type="KEGG" id="mhy:mhp052"/>
<dbReference type="eggNOG" id="COG0712">
    <property type="taxonomic scope" value="Bacteria"/>
</dbReference>
<dbReference type="HOGENOM" id="CLU_085114_4_2_14"/>
<dbReference type="PhylomeDB" id="Q601Z8"/>
<dbReference type="Proteomes" id="UP000006822">
    <property type="component" value="Chromosome"/>
</dbReference>
<dbReference type="GO" id="GO:0005886">
    <property type="term" value="C:plasma membrane"/>
    <property type="evidence" value="ECO:0007669"/>
    <property type="project" value="UniProtKB-SubCell"/>
</dbReference>
<dbReference type="GO" id="GO:0045259">
    <property type="term" value="C:proton-transporting ATP synthase complex"/>
    <property type="evidence" value="ECO:0007669"/>
    <property type="project" value="UniProtKB-KW"/>
</dbReference>
<dbReference type="GO" id="GO:0046933">
    <property type="term" value="F:proton-transporting ATP synthase activity, rotational mechanism"/>
    <property type="evidence" value="ECO:0007669"/>
    <property type="project" value="UniProtKB-UniRule"/>
</dbReference>
<dbReference type="Gene3D" id="1.10.520.20">
    <property type="entry name" value="N-terminal domain of the delta subunit of the F1F0-ATP synthase"/>
    <property type="match status" value="1"/>
</dbReference>
<dbReference type="HAMAP" id="MF_01416">
    <property type="entry name" value="ATP_synth_delta_bact"/>
    <property type="match status" value="1"/>
</dbReference>
<dbReference type="InterPro" id="IPR026015">
    <property type="entry name" value="ATP_synth_OSCP/delta_N_sf"/>
</dbReference>
<dbReference type="InterPro" id="IPR000711">
    <property type="entry name" value="ATPase_OSCP/dsu"/>
</dbReference>
<dbReference type="NCBIfam" id="TIGR01145">
    <property type="entry name" value="ATP_synt_delta"/>
    <property type="match status" value="1"/>
</dbReference>
<dbReference type="NCBIfam" id="NF009975">
    <property type="entry name" value="PRK13436.1"/>
    <property type="match status" value="1"/>
</dbReference>
<dbReference type="PANTHER" id="PTHR11910">
    <property type="entry name" value="ATP SYNTHASE DELTA CHAIN"/>
    <property type="match status" value="1"/>
</dbReference>
<dbReference type="Pfam" id="PF00213">
    <property type="entry name" value="OSCP"/>
    <property type="match status" value="1"/>
</dbReference>
<dbReference type="PRINTS" id="PR00125">
    <property type="entry name" value="ATPASEDELTA"/>
</dbReference>
<dbReference type="SUPFAM" id="SSF47928">
    <property type="entry name" value="N-terminal domain of the delta subunit of the F1F0-ATP synthase"/>
    <property type="match status" value="1"/>
</dbReference>
<feature type="chain" id="PRO_1000184756" description="ATP synthase subunit delta">
    <location>
        <begin position="1"/>
        <end position="187"/>
    </location>
</feature>
<comment type="function">
    <text evidence="1">F(1)F(0) ATP synthase produces ATP from ADP in the presence of a proton or sodium gradient. F-type ATPases consist of two structural domains, F(1) containing the extramembraneous catalytic core and F(0) containing the membrane proton channel, linked together by a central stalk and a peripheral stalk. During catalysis, ATP synthesis in the catalytic domain of F(1) is coupled via a rotary mechanism of the central stalk subunits to proton translocation.</text>
</comment>
<comment type="function">
    <text evidence="1">This protein is part of the stalk that links CF(0) to CF(1). It either transmits conformational changes from CF(0) to CF(1) or is implicated in proton conduction.</text>
</comment>
<comment type="subunit">
    <text evidence="1">F-type ATPases have 2 components, F(1) - the catalytic core - and F(0) - the membrane proton channel. F(1) has five subunits: alpha(3), beta(3), gamma(1), delta(1), epsilon(1). F(0) has three main subunits: a(1), b(2) and c(10-14). The alpha and beta chains form an alternating ring which encloses part of the gamma chain. F(1) is attached to F(0) by a central stalk formed by the gamma and epsilon chains, while a peripheral stalk is formed by the delta and b chains.</text>
</comment>
<comment type="subcellular location">
    <subcellularLocation>
        <location evidence="1">Cell membrane</location>
        <topology evidence="1">Peripheral membrane protein</topology>
    </subcellularLocation>
</comment>
<comment type="similarity">
    <text evidence="1">Belongs to the ATPase delta chain family.</text>
</comment>
<sequence>MYLYKKNYYGYAESLLDISISENNVEKYINDCFFILSIIQNNQVLILLFKSHFIGKQEKFNIIDKIFSAKIEKILVNFLKVIAKNNLFLYYKQILLKYIKLANSHLSQTWGEIQTAFPISSVMTSSFESILSKKLGKKVHLRHKINSKLISGIRIIVDNQIFENSLFSELKLLKQNLKKHLITKNDL</sequence>